<gene>
    <name type="primary">WNK4</name>
    <name type="ordered locus">Os02g0672800</name>
    <name type="ordered locus">LOC_Os02g45130</name>
    <name type="ORF">OJ1197_E09.9</name>
    <name type="ORF">OsJ_007637</name>
</gene>
<feature type="chain" id="PRO_0000351674" description="Probable serine/threonine-protein kinase WNK4">
    <location>
        <begin position="1"/>
        <end position="612"/>
    </location>
</feature>
<feature type="domain" description="Protein kinase" evidence="3">
    <location>
        <begin position="25"/>
        <end position="282"/>
    </location>
</feature>
<feature type="active site" description="Proton acceptor" evidence="2">
    <location>
        <position position="172"/>
    </location>
</feature>
<feature type="binding site" evidence="1">
    <location>
        <begin position="105"/>
        <end position="108"/>
    </location>
    <ligand>
        <name>ATP</name>
        <dbReference type="ChEBI" id="CHEBI:30616"/>
    </ligand>
</feature>
<feature type="binding site" evidence="1">
    <location>
        <position position="155"/>
    </location>
    <ligand>
        <name>ATP</name>
        <dbReference type="ChEBI" id="CHEBI:30616"/>
    </ligand>
</feature>
<feature type="sequence conflict" description="In Ref. 5; AK073845." evidence="4" ref="5">
    <original>Q</original>
    <variation>R</variation>
    <location>
        <position position="258"/>
    </location>
</feature>
<feature type="sequence conflict" description="In Ref. 5; AK073845." evidence="4" ref="5">
    <original>E</original>
    <variation>G</variation>
    <location>
        <position position="599"/>
    </location>
</feature>
<proteinExistence type="evidence at transcript level"/>
<comment type="catalytic activity">
    <reaction>
        <text>L-seryl-[protein] + ATP = O-phospho-L-seryl-[protein] + ADP + H(+)</text>
        <dbReference type="Rhea" id="RHEA:17989"/>
        <dbReference type="Rhea" id="RHEA-COMP:9863"/>
        <dbReference type="Rhea" id="RHEA-COMP:11604"/>
        <dbReference type="ChEBI" id="CHEBI:15378"/>
        <dbReference type="ChEBI" id="CHEBI:29999"/>
        <dbReference type="ChEBI" id="CHEBI:30616"/>
        <dbReference type="ChEBI" id="CHEBI:83421"/>
        <dbReference type="ChEBI" id="CHEBI:456216"/>
        <dbReference type="EC" id="2.7.11.1"/>
    </reaction>
</comment>
<comment type="catalytic activity">
    <reaction>
        <text>L-threonyl-[protein] + ATP = O-phospho-L-threonyl-[protein] + ADP + H(+)</text>
        <dbReference type="Rhea" id="RHEA:46608"/>
        <dbReference type="Rhea" id="RHEA-COMP:11060"/>
        <dbReference type="Rhea" id="RHEA-COMP:11605"/>
        <dbReference type="ChEBI" id="CHEBI:15378"/>
        <dbReference type="ChEBI" id="CHEBI:30013"/>
        <dbReference type="ChEBI" id="CHEBI:30616"/>
        <dbReference type="ChEBI" id="CHEBI:61977"/>
        <dbReference type="ChEBI" id="CHEBI:456216"/>
        <dbReference type="EC" id="2.7.11.1"/>
    </reaction>
</comment>
<comment type="similarity">
    <text evidence="3">Belongs to the protein kinase superfamily. Ser/Thr protein kinase family. WNK subfamily.</text>
</comment>
<comment type="caution">
    <text evidence="1">Was named WNK/'with no lysine(K)' because key residues for catalysis, including the lysine involved in ATP binding, are either not conserved or differ compared to the residues described in other kinase family proteins.</text>
</comment>
<comment type="sequence caution" evidence="4">
    <conflict type="erroneous gene model prediction">
        <sequence resource="EMBL-CDS" id="EAZ24154"/>
    </conflict>
</comment>
<protein>
    <recommendedName>
        <fullName>Probable serine/threonine-protein kinase WNK4</fullName>
        <shortName>OsWNK4</shortName>
        <ecNumber>2.7.11.1</ecNumber>
    </recommendedName>
    <alternativeName>
        <fullName>Protein kinase with no lysine 4</fullName>
    </alternativeName>
</protein>
<evidence type="ECO:0000250" key="1">
    <source>
        <dbReference type="UniProtKB" id="Q9H4A3"/>
    </source>
</evidence>
<evidence type="ECO:0000250" key="2">
    <source>
        <dbReference type="UniProtKB" id="Q9JIH7"/>
    </source>
</evidence>
<evidence type="ECO:0000255" key="3">
    <source>
        <dbReference type="PROSITE-ProRule" id="PRU00159"/>
    </source>
</evidence>
<evidence type="ECO:0000305" key="4"/>
<name>WNK4_ORYSJ</name>
<keyword id="KW-0067">ATP-binding</keyword>
<keyword id="KW-0418">Kinase</keyword>
<keyword id="KW-0547">Nucleotide-binding</keyword>
<keyword id="KW-1185">Reference proteome</keyword>
<keyword id="KW-0723">Serine/threonine-protein kinase</keyword>
<keyword id="KW-0808">Transferase</keyword>
<dbReference type="EC" id="2.7.11.1"/>
<dbReference type="EMBL" id="AP004160">
    <property type="protein sequence ID" value="BAD27820.1"/>
    <property type="molecule type" value="Genomic_DNA"/>
</dbReference>
<dbReference type="EMBL" id="AP008208">
    <property type="protein sequence ID" value="BAF09623.1"/>
    <property type="molecule type" value="Genomic_DNA"/>
</dbReference>
<dbReference type="EMBL" id="AP014958">
    <property type="protein sequence ID" value="BAS80249.1"/>
    <property type="molecule type" value="Genomic_DNA"/>
</dbReference>
<dbReference type="EMBL" id="CM000139">
    <property type="protein sequence ID" value="EAZ24154.1"/>
    <property type="status" value="ALT_SEQ"/>
    <property type="molecule type" value="Genomic_DNA"/>
</dbReference>
<dbReference type="EMBL" id="AK073845">
    <property type="status" value="NOT_ANNOTATED_CDS"/>
    <property type="molecule type" value="mRNA"/>
</dbReference>
<dbReference type="RefSeq" id="XP_015625440.1">
    <property type="nucleotide sequence ID" value="XM_015769954.1"/>
</dbReference>
<dbReference type="SMR" id="Q6EU49"/>
<dbReference type="FunCoup" id="Q6EU49">
    <property type="interactions" value="1565"/>
</dbReference>
<dbReference type="STRING" id="39947.Q6EU49"/>
<dbReference type="PaxDb" id="39947-Q6EU49"/>
<dbReference type="EnsemblPlants" id="Os02t0672800-01">
    <property type="protein sequence ID" value="Os02t0672800-01"/>
    <property type="gene ID" value="Os02g0672800"/>
</dbReference>
<dbReference type="Gramene" id="Os02t0672800-01">
    <property type="protein sequence ID" value="Os02t0672800-01"/>
    <property type="gene ID" value="Os02g0672800"/>
</dbReference>
<dbReference type="KEGG" id="dosa:Os02g0672800"/>
<dbReference type="eggNOG" id="KOG0584">
    <property type="taxonomic scope" value="Eukaryota"/>
</dbReference>
<dbReference type="HOGENOM" id="CLU_000288_142_0_1"/>
<dbReference type="InParanoid" id="Q6EU49"/>
<dbReference type="OMA" id="QHWFQEL"/>
<dbReference type="OrthoDB" id="4062651at2759"/>
<dbReference type="Proteomes" id="UP000000763">
    <property type="component" value="Chromosome 2"/>
</dbReference>
<dbReference type="Proteomes" id="UP000007752">
    <property type="component" value="Chromosome 2"/>
</dbReference>
<dbReference type="Proteomes" id="UP000059680">
    <property type="component" value="Chromosome 2"/>
</dbReference>
<dbReference type="GO" id="GO:0005737">
    <property type="term" value="C:cytoplasm"/>
    <property type="evidence" value="ECO:0000318"/>
    <property type="project" value="GO_Central"/>
</dbReference>
<dbReference type="GO" id="GO:0005524">
    <property type="term" value="F:ATP binding"/>
    <property type="evidence" value="ECO:0007669"/>
    <property type="project" value="UniProtKB-KW"/>
</dbReference>
<dbReference type="GO" id="GO:0106310">
    <property type="term" value="F:protein serine kinase activity"/>
    <property type="evidence" value="ECO:0007669"/>
    <property type="project" value="RHEA"/>
</dbReference>
<dbReference type="GO" id="GO:0004674">
    <property type="term" value="F:protein serine/threonine kinase activity"/>
    <property type="evidence" value="ECO:0000318"/>
    <property type="project" value="GO_Central"/>
</dbReference>
<dbReference type="GO" id="GO:0035556">
    <property type="term" value="P:intracellular signal transduction"/>
    <property type="evidence" value="ECO:0000318"/>
    <property type="project" value="GO_Central"/>
</dbReference>
<dbReference type="CDD" id="cd13983">
    <property type="entry name" value="STKc_WNK"/>
    <property type="match status" value="1"/>
</dbReference>
<dbReference type="FunFam" id="3.30.200.20:FF:000075">
    <property type="entry name" value="Probable serine/threonine-protein kinase WNK1"/>
    <property type="match status" value="1"/>
</dbReference>
<dbReference type="FunFam" id="1.10.510.10:FF:000046">
    <property type="entry name" value="probable serine/threonine-protein kinase WNK9"/>
    <property type="match status" value="1"/>
</dbReference>
<dbReference type="FunFam" id="3.10.20.90:FF:000232">
    <property type="entry name" value="Serine/threonine-protein kinase WNK8"/>
    <property type="match status" value="1"/>
</dbReference>
<dbReference type="Gene3D" id="3.10.20.90">
    <property type="entry name" value="Phosphatidylinositol 3-kinase Catalytic Subunit, Chain A, domain 1"/>
    <property type="match status" value="1"/>
</dbReference>
<dbReference type="Gene3D" id="3.30.200.20">
    <property type="entry name" value="Phosphorylase Kinase, domain 1"/>
    <property type="match status" value="1"/>
</dbReference>
<dbReference type="Gene3D" id="1.10.510.10">
    <property type="entry name" value="Transferase(Phosphotransferase) domain 1"/>
    <property type="match status" value="1"/>
</dbReference>
<dbReference type="InterPro" id="IPR011009">
    <property type="entry name" value="Kinase-like_dom_sf"/>
</dbReference>
<dbReference type="InterPro" id="IPR024678">
    <property type="entry name" value="Kinase_OSR1/WNK_CCT"/>
</dbReference>
<dbReference type="InterPro" id="IPR000719">
    <property type="entry name" value="Prot_kinase_dom"/>
</dbReference>
<dbReference type="InterPro" id="IPR008271">
    <property type="entry name" value="Ser/Thr_kinase_AS"/>
</dbReference>
<dbReference type="InterPro" id="IPR050588">
    <property type="entry name" value="WNK_Ser-Thr_kinase"/>
</dbReference>
<dbReference type="PANTHER" id="PTHR13902">
    <property type="entry name" value="SERINE/THREONINE-PROTEIN KINASE WNK WITH NO LYSINE -RELATED"/>
    <property type="match status" value="1"/>
</dbReference>
<dbReference type="Pfam" id="PF12202">
    <property type="entry name" value="OSR1_C"/>
    <property type="match status" value="1"/>
</dbReference>
<dbReference type="Pfam" id="PF00069">
    <property type="entry name" value="Pkinase"/>
    <property type="match status" value="1"/>
</dbReference>
<dbReference type="SMART" id="SM00220">
    <property type="entry name" value="S_TKc"/>
    <property type="match status" value="1"/>
</dbReference>
<dbReference type="SUPFAM" id="SSF56112">
    <property type="entry name" value="Protein kinase-like (PK-like)"/>
    <property type="match status" value="1"/>
</dbReference>
<dbReference type="PROSITE" id="PS50011">
    <property type="entry name" value="PROTEIN_KINASE_DOM"/>
    <property type="match status" value="1"/>
</dbReference>
<dbReference type="PROSITE" id="PS00108">
    <property type="entry name" value="PROTEIN_KINASE_ST"/>
    <property type="match status" value="1"/>
</dbReference>
<sequence length="612" mass="68710">MEVFGDLDKVDDAECVEVDPTRRYIRYNEVLGRGAMKTVYKAFDEVEGIEVAWSQVEIDEVMQSPDNLERLYSEVHLLKSLKHENVMKFYNYWVDDQKKTINVITELFTSGSLRQYRQKHPRVDLKAIKNWARQVLRGLDYLHTHQPPIIHRDLKCDNIFVNGNHGEVKIGDLGLATVMLTPRAKSVIGTPEFMAPELYDENYDELVDIYSFGMCMLEMFTLEYPYSECTNAAQIFKKVSKGVKPAALAKITNIQAKQFIDKCLVPASERLSAKELLQDPFLCSDNSSVLVGTKFPSSLPKSVDVSLEALHMDVDTNESMCTSTCKRNDLGGPHRSVLEFTRTNKNTELKLTGEKLDDNSVSLVLRIADLCGHARNIHFLFYLDSDTAMSVAAEMVEQLELADCDVTFIADFIDLLIVNLVPGQQLMNDAVMSTSSESKMGESEHVITSQQHPSELTHDYVLVEGMMHSKEANASPSDYIDSLLNATNLGGPNSSEGSDISVQLDGSSKSLSEYGVDEYRTLECGAYKGTDKLGCRHPLSNGSSNFAIFQMDQASHHSELVIGASVSITENRDVLNGELGLIEAQYEQWFRELTRMREEALEGARKKWLPDK</sequence>
<reference key="1">
    <citation type="journal article" date="2005" name="Nature">
        <title>The map-based sequence of the rice genome.</title>
        <authorList>
            <consortium name="International rice genome sequencing project (IRGSP)"/>
        </authorList>
    </citation>
    <scope>NUCLEOTIDE SEQUENCE [LARGE SCALE GENOMIC DNA]</scope>
    <source>
        <strain>cv. Nipponbare</strain>
    </source>
</reference>
<reference key="2">
    <citation type="journal article" date="2008" name="Nucleic Acids Res.">
        <title>The rice annotation project database (RAP-DB): 2008 update.</title>
        <authorList>
            <consortium name="The rice annotation project (RAP)"/>
        </authorList>
    </citation>
    <scope>GENOME REANNOTATION</scope>
    <source>
        <strain>cv. Nipponbare</strain>
    </source>
</reference>
<reference key="3">
    <citation type="journal article" date="2013" name="Rice">
        <title>Improvement of the Oryza sativa Nipponbare reference genome using next generation sequence and optical map data.</title>
        <authorList>
            <person name="Kawahara Y."/>
            <person name="de la Bastide M."/>
            <person name="Hamilton J.P."/>
            <person name="Kanamori H."/>
            <person name="McCombie W.R."/>
            <person name="Ouyang S."/>
            <person name="Schwartz D.C."/>
            <person name="Tanaka T."/>
            <person name="Wu J."/>
            <person name="Zhou S."/>
            <person name="Childs K.L."/>
            <person name="Davidson R.M."/>
            <person name="Lin H."/>
            <person name="Quesada-Ocampo L."/>
            <person name="Vaillancourt B."/>
            <person name="Sakai H."/>
            <person name="Lee S.S."/>
            <person name="Kim J."/>
            <person name="Numa H."/>
            <person name="Itoh T."/>
            <person name="Buell C.R."/>
            <person name="Matsumoto T."/>
        </authorList>
    </citation>
    <scope>GENOME REANNOTATION</scope>
    <source>
        <strain>cv. Nipponbare</strain>
    </source>
</reference>
<reference key="4">
    <citation type="journal article" date="2005" name="PLoS Biol.">
        <title>The genomes of Oryza sativa: a history of duplications.</title>
        <authorList>
            <person name="Yu J."/>
            <person name="Wang J."/>
            <person name="Lin W."/>
            <person name="Li S."/>
            <person name="Li H."/>
            <person name="Zhou J."/>
            <person name="Ni P."/>
            <person name="Dong W."/>
            <person name="Hu S."/>
            <person name="Zeng C."/>
            <person name="Zhang J."/>
            <person name="Zhang Y."/>
            <person name="Li R."/>
            <person name="Xu Z."/>
            <person name="Li S."/>
            <person name="Li X."/>
            <person name="Zheng H."/>
            <person name="Cong L."/>
            <person name="Lin L."/>
            <person name="Yin J."/>
            <person name="Geng J."/>
            <person name="Li G."/>
            <person name="Shi J."/>
            <person name="Liu J."/>
            <person name="Lv H."/>
            <person name="Li J."/>
            <person name="Wang J."/>
            <person name="Deng Y."/>
            <person name="Ran L."/>
            <person name="Shi X."/>
            <person name="Wang X."/>
            <person name="Wu Q."/>
            <person name="Li C."/>
            <person name="Ren X."/>
            <person name="Wang J."/>
            <person name="Wang X."/>
            <person name="Li D."/>
            <person name="Liu D."/>
            <person name="Zhang X."/>
            <person name="Ji Z."/>
            <person name="Zhao W."/>
            <person name="Sun Y."/>
            <person name="Zhang Z."/>
            <person name="Bao J."/>
            <person name="Han Y."/>
            <person name="Dong L."/>
            <person name="Ji J."/>
            <person name="Chen P."/>
            <person name="Wu S."/>
            <person name="Liu J."/>
            <person name="Xiao Y."/>
            <person name="Bu D."/>
            <person name="Tan J."/>
            <person name="Yang L."/>
            <person name="Ye C."/>
            <person name="Zhang J."/>
            <person name="Xu J."/>
            <person name="Zhou Y."/>
            <person name="Yu Y."/>
            <person name="Zhang B."/>
            <person name="Zhuang S."/>
            <person name="Wei H."/>
            <person name="Liu B."/>
            <person name="Lei M."/>
            <person name="Yu H."/>
            <person name="Li Y."/>
            <person name="Xu H."/>
            <person name="Wei S."/>
            <person name="He X."/>
            <person name="Fang L."/>
            <person name="Zhang Z."/>
            <person name="Zhang Y."/>
            <person name="Huang X."/>
            <person name="Su Z."/>
            <person name="Tong W."/>
            <person name="Li J."/>
            <person name="Tong Z."/>
            <person name="Li S."/>
            <person name="Ye J."/>
            <person name="Wang L."/>
            <person name="Fang L."/>
            <person name="Lei T."/>
            <person name="Chen C.-S."/>
            <person name="Chen H.-C."/>
            <person name="Xu Z."/>
            <person name="Li H."/>
            <person name="Huang H."/>
            <person name="Zhang F."/>
            <person name="Xu H."/>
            <person name="Li N."/>
            <person name="Zhao C."/>
            <person name="Li S."/>
            <person name="Dong L."/>
            <person name="Huang Y."/>
            <person name="Li L."/>
            <person name="Xi Y."/>
            <person name="Qi Q."/>
            <person name="Li W."/>
            <person name="Zhang B."/>
            <person name="Hu W."/>
            <person name="Zhang Y."/>
            <person name="Tian X."/>
            <person name="Jiao Y."/>
            <person name="Liang X."/>
            <person name="Jin J."/>
            <person name="Gao L."/>
            <person name="Zheng W."/>
            <person name="Hao B."/>
            <person name="Liu S.-M."/>
            <person name="Wang W."/>
            <person name="Yuan L."/>
            <person name="Cao M."/>
            <person name="McDermott J."/>
            <person name="Samudrala R."/>
            <person name="Wang J."/>
            <person name="Wong G.K.-S."/>
            <person name="Yang H."/>
        </authorList>
    </citation>
    <scope>NUCLEOTIDE SEQUENCE [LARGE SCALE GENOMIC DNA]</scope>
    <source>
        <strain>cv. Nipponbare</strain>
    </source>
</reference>
<reference key="5">
    <citation type="journal article" date="2003" name="Science">
        <title>Collection, mapping, and annotation of over 28,000 cDNA clones from japonica rice.</title>
        <authorList>
            <consortium name="The rice full-length cDNA consortium"/>
        </authorList>
    </citation>
    <scope>NUCLEOTIDE SEQUENCE [LARGE SCALE MRNA]</scope>
    <source>
        <strain>cv. Nipponbare</strain>
    </source>
</reference>
<organism>
    <name type="scientific">Oryza sativa subsp. japonica</name>
    <name type="common">Rice</name>
    <dbReference type="NCBI Taxonomy" id="39947"/>
    <lineage>
        <taxon>Eukaryota</taxon>
        <taxon>Viridiplantae</taxon>
        <taxon>Streptophyta</taxon>
        <taxon>Embryophyta</taxon>
        <taxon>Tracheophyta</taxon>
        <taxon>Spermatophyta</taxon>
        <taxon>Magnoliopsida</taxon>
        <taxon>Liliopsida</taxon>
        <taxon>Poales</taxon>
        <taxon>Poaceae</taxon>
        <taxon>BOP clade</taxon>
        <taxon>Oryzoideae</taxon>
        <taxon>Oryzeae</taxon>
        <taxon>Oryzinae</taxon>
        <taxon>Oryza</taxon>
        <taxon>Oryza sativa</taxon>
    </lineage>
</organism>
<accession>Q6EU49</accession>
<accession>A0A0N7KFV2</accession>
<accession>A3AA15</accession>